<evidence type="ECO:0000250" key="1"/>
<evidence type="ECO:0000250" key="2">
    <source>
        <dbReference type="UniProtKB" id="P00157"/>
    </source>
</evidence>
<evidence type="ECO:0000255" key="3">
    <source>
        <dbReference type="PROSITE-ProRule" id="PRU00967"/>
    </source>
</evidence>
<evidence type="ECO:0000255" key="4">
    <source>
        <dbReference type="PROSITE-ProRule" id="PRU00968"/>
    </source>
</evidence>
<proteinExistence type="inferred from homology"/>
<feature type="chain" id="PRO_0000061177" description="Cytochrome b">
    <location>
        <begin position="1"/>
        <end position="382"/>
    </location>
</feature>
<feature type="transmembrane region" description="Helical" evidence="2">
    <location>
        <begin position="33"/>
        <end position="53"/>
    </location>
</feature>
<feature type="transmembrane region" description="Helical" evidence="2">
    <location>
        <begin position="77"/>
        <end position="98"/>
    </location>
</feature>
<feature type="transmembrane region" description="Helical" evidence="2">
    <location>
        <begin position="113"/>
        <end position="133"/>
    </location>
</feature>
<feature type="transmembrane region" description="Helical" evidence="2">
    <location>
        <begin position="178"/>
        <end position="198"/>
    </location>
</feature>
<feature type="transmembrane region" description="Helical" evidence="2">
    <location>
        <begin position="226"/>
        <end position="246"/>
    </location>
</feature>
<feature type="transmembrane region" description="Helical" evidence="2">
    <location>
        <begin position="288"/>
        <end position="308"/>
    </location>
</feature>
<feature type="transmembrane region" description="Helical" evidence="2">
    <location>
        <begin position="320"/>
        <end position="340"/>
    </location>
</feature>
<feature type="transmembrane region" description="Helical" evidence="2">
    <location>
        <begin position="347"/>
        <end position="367"/>
    </location>
</feature>
<feature type="binding site" description="axial binding residue" evidence="2">
    <location>
        <position position="83"/>
    </location>
    <ligand>
        <name>heme b</name>
        <dbReference type="ChEBI" id="CHEBI:60344"/>
        <label>b562</label>
    </ligand>
    <ligandPart>
        <name>Fe</name>
        <dbReference type="ChEBI" id="CHEBI:18248"/>
    </ligandPart>
</feature>
<feature type="binding site" description="axial binding residue" evidence="2">
    <location>
        <position position="97"/>
    </location>
    <ligand>
        <name>heme b</name>
        <dbReference type="ChEBI" id="CHEBI:60344"/>
        <label>b566</label>
    </ligand>
    <ligandPart>
        <name>Fe</name>
        <dbReference type="ChEBI" id="CHEBI:18248"/>
    </ligandPart>
</feature>
<feature type="binding site" description="axial binding residue" evidence="2">
    <location>
        <position position="182"/>
    </location>
    <ligand>
        <name>heme b</name>
        <dbReference type="ChEBI" id="CHEBI:60344"/>
        <label>b562</label>
    </ligand>
    <ligandPart>
        <name>Fe</name>
        <dbReference type="ChEBI" id="CHEBI:18248"/>
    </ligandPart>
</feature>
<feature type="binding site" description="axial binding residue" evidence="2">
    <location>
        <position position="196"/>
    </location>
    <ligand>
        <name>heme b</name>
        <dbReference type="ChEBI" id="CHEBI:60344"/>
        <label>b566</label>
    </ligand>
    <ligandPart>
        <name>Fe</name>
        <dbReference type="ChEBI" id="CHEBI:18248"/>
    </ligandPart>
</feature>
<feature type="binding site" evidence="2">
    <location>
        <position position="201"/>
    </location>
    <ligand>
        <name>a ubiquinone</name>
        <dbReference type="ChEBI" id="CHEBI:16389"/>
    </ligand>
</feature>
<name>CYB_MICDE</name>
<gene>
    <name type="primary">MT-CYB</name>
    <name type="synonym">COB</name>
    <name type="synonym">CYTB</name>
    <name type="synonym">MTCYB</name>
</gene>
<dbReference type="EMBL" id="U34673">
    <property type="protein sequence ID" value="AAA99752.1"/>
    <property type="molecule type" value="Genomic_DNA"/>
</dbReference>
<dbReference type="SMR" id="Q34973"/>
<dbReference type="GO" id="GO:0005743">
    <property type="term" value="C:mitochondrial inner membrane"/>
    <property type="evidence" value="ECO:0007669"/>
    <property type="project" value="UniProtKB-SubCell"/>
</dbReference>
<dbReference type="GO" id="GO:0045275">
    <property type="term" value="C:respiratory chain complex III"/>
    <property type="evidence" value="ECO:0007669"/>
    <property type="project" value="InterPro"/>
</dbReference>
<dbReference type="GO" id="GO:0046872">
    <property type="term" value="F:metal ion binding"/>
    <property type="evidence" value="ECO:0007669"/>
    <property type="project" value="UniProtKB-KW"/>
</dbReference>
<dbReference type="GO" id="GO:0008121">
    <property type="term" value="F:ubiquinol-cytochrome-c reductase activity"/>
    <property type="evidence" value="ECO:0007669"/>
    <property type="project" value="InterPro"/>
</dbReference>
<dbReference type="GO" id="GO:0006122">
    <property type="term" value="P:mitochondrial electron transport, ubiquinol to cytochrome c"/>
    <property type="evidence" value="ECO:0007669"/>
    <property type="project" value="TreeGrafter"/>
</dbReference>
<dbReference type="CDD" id="cd00290">
    <property type="entry name" value="cytochrome_b_C"/>
    <property type="match status" value="1"/>
</dbReference>
<dbReference type="CDD" id="cd00284">
    <property type="entry name" value="Cytochrome_b_N"/>
    <property type="match status" value="1"/>
</dbReference>
<dbReference type="FunFam" id="1.20.810.10:FF:000002">
    <property type="entry name" value="Cytochrome b"/>
    <property type="match status" value="1"/>
</dbReference>
<dbReference type="Gene3D" id="1.20.810.10">
    <property type="entry name" value="Cytochrome Bc1 Complex, Chain C"/>
    <property type="match status" value="1"/>
</dbReference>
<dbReference type="InterPro" id="IPR005798">
    <property type="entry name" value="Cyt_b/b6_C"/>
</dbReference>
<dbReference type="InterPro" id="IPR036150">
    <property type="entry name" value="Cyt_b/b6_C_sf"/>
</dbReference>
<dbReference type="InterPro" id="IPR005797">
    <property type="entry name" value="Cyt_b/b6_N"/>
</dbReference>
<dbReference type="InterPro" id="IPR027387">
    <property type="entry name" value="Cytb/b6-like_sf"/>
</dbReference>
<dbReference type="InterPro" id="IPR030689">
    <property type="entry name" value="Cytochrome_b"/>
</dbReference>
<dbReference type="InterPro" id="IPR048260">
    <property type="entry name" value="Cytochrome_b_C_euk/bac"/>
</dbReference>
<dbReference type="InterPro" id="IPR048259">
    <property type="entry name" value="Cytochrome_b_N_euk/bac"/>
</dbReference>
<dbReference type="InterPro" id="IPR016174">
    <property type="entry name" value="Di-haem_cyt_TM"/>
</dbReference>
<dbReference type="PANTHER" id="PTHR19271">
    <property type="entry name" value="CYTOCHROME B"/>
    <property type="match status" value="1"/>
</dbReference>
<dbReference type="PANTHER" id="PTHR19271:SF16">
    <property type="entry name" value="CYTOCHROME B"/>
    <property type="match status" value="1"/>
</dbReference>
<dbReference type="Pfam" id="PF00032">
    <property type="entry name" value="Cytochrom_B_C"/>
    <property type="match status" value="1"/>
</dbReference>
<dbReference type="Pfam" id="PF00033">
    <property type="entry name" value="Cytochrome_B"/>
    <property type="match status" value="1"/>
</dbReference>
<dbReference type="PIRSF" id="PIRSF038885">
    <property type="entry name" value="COB"/>
    <property type="match status" value="1"/>
</dbReference>
<dbReference type="SUPFAM" id="SSF81648">
    <property type="entry name" value="a domain/subunit of cytochrome bc1 complex (Ubiquinol-cytochrome c reductase)"/>
    <property type="match status" value="1"/>
</dbReference>
<dbReference type="SUPFAM" id="SSF81342">
    <property type="entry name" value="Transmembrane di-heme cytochromes"/>
    <property type="match status" value="1"/>
</dbReference>
<dbReference type="PROSITE" id="PS51003">
    <property type="entry name" value="CYTB_CTER"/>
    <property type="match status" value="1"/>
</dbReference>
<dbReference type="PROSITE" id="PS51002">
    <property type="entry name" value="CYTB_NTER"/>
    <property type="match status" value="1"/>
</dbReference>
<reference key="1">
    <citation type="journal article" date="1996" name="J. Mammal. Evol.">
        <title>Relationships among didelphid marsupials based on sequence variation in the mitochondrial cytochrome b gene.</title>
        <authorList>
            <person name="Patton J.L."/>
            <person name="dos Reis Maria S.F."/>
            <person name="da Silva N.F."/>
        </authorList>
    </citation>
    <scope>NUCLEOTIDE SEQUENCE [GENOMIC DNA]</scope>
</reference>
<accession>Q34973</accession>
<organism>
    <name type="scientific">Micoureus demerarae</name>
    <name type="common">Long-furred woolly mouse opossum</name>
    <name type="synonym">Marmosa demerarae</name>
    <dbReference type="NCBI Taxonomy" id="42719"/>
    <lineage>
        <taxon>Eukaryota</taxon>
        <taxon>Metazoa</taxon>
        <taxon>Chordata</taxon>
        <taxon>Craniata</taxon>
        <taxon>Vertebrata</taxon>
        <taxon>Euteleostomi</taxon>
        <taxon>Mammalia</taxon>
        <taxon>Metatheria</taxon>
        <taxon>Didelphimorphia</taxon>
        <taxon>Didelphidae</taxon>
        <taxon>Marmosa</taxon>
        <taxon>Micoureus</taxon>
    </lineage>
</organism>
<sequence length="382" mass="43047">MTNLRKNHPIMKIVNQSFIDLPAPSNISAWWNFGSLLGICLIIQILTGLFLAMHYTSDTLTAFSSVAHICRDVNYGWLIRKLHANGASMFFMCLFIHVGRGIYYGSYLFKETWNIGVILLLTVMATAFVGYVLPWGQMSFWGATVITNLLSAIPYIGSTLVEWIWGGFSVDKATLTRFFAFHFILPFIIMALVMVHLLFLHETGSNNPTGLNPDSDKIPFHPYYTIKDLLGFMLMILILMSLAMFSPDLLGDPDNFTPANPLNTPPHIKPEWYFLFAYAILRSIPNKLGGVLALLASILILIIIPLLHMSKQRSLMFRPISQTLFWLLTANLLTLTWIGGQPVEQPFIIIGQLASILYFTLIIVLMPLAGIMEDNLLEPKFP</sequence>
<keyword id="KW-0249">Electron transport</keyword>
<keyword id="KW-0349">Heme</keyword>
<keyword id="KW-0408">Iron</keyword>
<keyword id="KW-0472">Membrane</keyword>
<keyword id="KW-0479">Metal-binding</keyword>
<keyword id="KW-0496">Mitochondrion</keyword>
<keyword id="KW-0999">Mitochondrion inner membrane</keyword>
<keyword id="KW-0679">Respiratory chain</keyword>
<keyword id="KW-0812">Transmembrane</keyword>
<keyword id="KW-1133">Transmembrane helix</keyword>
<keyword id="KW-0813">Transport</keyword>
<keyword id="KW-0830">Ubiquinone</keyword>
<protein>
    <recommendedName>
        <fullName>Cytochrome b</fullName>
    </recommendedName>
    <alternativeName>
        <fullName>Complex III subunit 3</fullName>
    </alternativeName>
    <alternativeName>
        <fullName>Complex III subunit III</fullName>
    </alternativeName>
    <alternativeName>
        <fullName>Cytochrome b-c1 complex subunit 3</fullName>
    </alternativeName>
    <alternativeName>
        <fullName>Ubiquinol-cytochrome-c reductase complex cytochrome b subunit</fullName>
    </alternativeName>
</protein>
<geneLocation type="mitochondrion"/>
<comment type="function">
    <text evidence="2">Component of the ubiquinol-cytochrome c reductase complex (complex III or cytochrome b-c1 complex) that is part of the mitochondrial respiratory chain. The b-c1 complex mediates electron transfer from ubiquinol to cytochrome c. Contributes to the generation of a proton gradient across the mitochondrial membrane that is then used for ATP synthesis.</text>
</comment>
<comment type="cofactor">
    <cofactor evidence="2">
        <name>heme b</name>
        <dbReference type="ChEBI" id="CHEBI:60344"/>
    </cofactor>
    <text evidence="2">Binds 2 heme b groups non-covalently.</text>
</comment>
<comment type="subunit">
    <text evidence="2">The cytochrome bc1 complex contains 11 subunits: 3 respiratory subunits (MT-CYB, CYC1 and UQCRFS1), 2 core proteins (UQCRC1 and UQCRC2) and 6 low-molecular weight proteins (UQCRH/QCR6, UQCRB/QCR7, UQCRQ/QCR8, UQCR10/QCR9, UQCR11/QCR10 and a cleavage product of UQCRFS1). This cytochrome bc1 complex then forms a dimer.</text>
</comment>
<comment type="subcellular location">
    <subcellularLocation>
        <location evidence="2">Mitochondrion inner membrane</location>
        <topology evidence="2">Multi-pass membrane protein</topology>
    </subcellularLocation>
</comment>
<comment type="miscellaneous">
    <text evidence="1">Heme 1 (or BL or b562) is low-potential and absorbs at about 562 nm, and heme 2 (or BH or b566) is high-potential and absorbs at about 566 nm.</text>
</comment>
<comment type="similarity">
    <text evidence="3 4">Belongs to the cytochrome b family.</text>
</comment>
<comment type="caution">
    <text evidence="2">The full-length protein contains only eight transmembrane helices, not nine as predicted by bioinformatics tools.</text>
</comment>